<protein>
    <recommendedName>
        <fullName evidence="4">NGG1-interacting factor 3</fullName>
    </recommendedName>
</protein>
<organism>
    <name type="scientific">Saccharomyces cerevisiae (strain ATCC 204508 / S288c)</name>
    <name type="common">Baker's yeast</name>
    <dbReference type="NCBI Taxonomy" id="559292"/>
    <lineage>
        <taxon>Eukaryota</taxon>
        <taxon>Fungi</taxon>
        <taxon>Dikarya</taxon>
        <taxon>Ascomycota</taxon>
        <taxon>Saccharomycotina</taxon>
        <taxon>Saccharomycetes</taxon>
        <taxon>Saccharomycetales</taxon>
        <taxon>Saccharomycetaceae</taxon>
        <taxon>Saccharomyces</taxon>
    </lineage>
</organism>
<dbReference type="EMBL" id="Z72743">
    <property type="protein sequence ID" value="CAA96937.1"/>
    <property type="molecule type" value="Genomic_DNA"/>
</dbReference>
<dbReference type="EMBL" id="AY693216">
    <property type="protein sequence ID" value="AAT93235.1"/>
    <property type="molecule type" value="Genomic_DNA"/>
</dbReference>
<dbReference type="EMBL" id="BK006941">
    <property type="protein sequence ID" value="DAA07898.1"/>
    <property type="molecule type" value="Genomic_DNA"/>
</dbReference>
<dbReference type="PIR" id="S64243">
    <property type="entry name" value="S64243"/>
</dbReference>
<dbReference type="RefSeq" id="NP_011294.1">
    <property type="nucleotide sequence ID" value="NM_001181086.1"/>
</dbReference>
<dbReference type="SMR" id="P53081"/>
<dbReference type="BioGRID" id="33038">
    <property type="interactions" value="41"/>
</dbReference>
<dbReference type="DIP" id="DIP-1469N"/>
<dbReference type="FunCoup" id="P53081">
    <property type="interactions" value="723"/>
</dbReference>
<dbReference type="IntAct" id="P53081">
    <property type="interactions" value="18"/>
</dbReference>
<dbReference type="MINT" id="P53081"/>
<dbReference type="STRING" id="4932.YGL221C"/>
<dbReference type="iPTMnet" id="P53081"/>
<dbReference type="PaxDb" id="4932-YGL221C"/>
<dbReference type="PeptideAtlas" id="P53081"/>
<dbReference type="EnsemblFungi" id="YGL221C_mRNA">
    <property type="protein sequence ID" value="YGL221C"/>
    <property type="gene ID" value="YGL221C"/>
</dbReference>
<dbReference type="GeneID" id="852651"/>
<dbReference type="KEGG" id="sce:YGL221C"/>
<dbReference type="AGR" id="SGD:S000003189"/>
<dbReference type="SGD" id="S000003189">
    <property type="gene designation" value="NIF3"/>
</dbReference>
<dbReference type="VEuPathDB" id="FungiDB:YGL221C"/>
<dbReference type="eggNOG" id="KOG4131">
    <property type="taxonomic scope" value="Eukaryota"/>
</dbReference>
<dbReference type="GeneTree" id="ENSGT00390000003590"/>
<dbReference type="HOGENOM" id="CLU_037423_0_1_1"/>
<dbReference type="InParanoid" id="P53081"/>
<dbReference type="OMA" id="NFDKTHL"/>
<dbReference type="OrthoDB" id="3345469at2759"/>
<dbReference type="BioCyc" id="YEAST:G3O-30695-MONOMER"/>
<dbReference type="BioGRID-ORCS" id="852651">
    <property type="hits" value="8 hits in 10 CRISPR screens"/>
</dbReference>
<dbReference type="PRO" id="PR:P53081"/>
<dbReference type="Proteomes" id="UP000002311">
    <property type="component" value="Chromosome VII"/>
</dbReference>
<dbReference type="RNAct" id="P53081">
    <property type="molecule type" value="protein"/>
</dbReference>
<dbReference type="GO" id="GO:0005737">
    <property type="term" value="C:cytoplasm"/>
    <property type="evidence" value="ECO:0000314"/>
    <property type="project" value="SGD"/>
</dbReference>
<dbReference type="GO" id="GO:0005739">
    <property type="term" value="C:mitochondrion"/>
    <property type="evidence" value="ECO:0000314"/>
    <property type="project" value="SGD"/>
</dbReference>
<dbReference type="FunFam" id="3.40.1390.30:FF:000001">
    <property type="entry name" value="GTP cyclohydrolase 1 type 2"/>
    <property type="match status" value="1"/>
</dbReference>
<dbReference type="Gene3D" id="3.40.1390.30">
    <property type="entry name" value="NIF3 (NGG1p interacting factor 3)-like"/>
    <property type="match status" value="1"/>
</dbReference>
<dbReference type="InterPro" id="IPR002678">
    <property type="entry name" value="DUF34/NIF3"/>
</dbReference>
<dbReference type="InterPro" id="IPR036069">
    <property type="entry name" value="DUF34/NIF3_sf"/>
</dbReference>
<dbReference type="NCBIfam" id="TIGR00486">
    <property type="entry name" value="YbgI_SA1388"/>
    <property type="match status" value="1"/>
</dbReference>
<dbReference type="PANTHER" id="PTHR13799">
    <property type="entry name" value="NGG1 INTERACTING FACTOR 3"/>
    <property type="match status" value="1"/>
</dbReference>
<dbReference type="PANTHER" id="PTHR13799:SF13">
    <property type="entry name" value="NIF3-LIKE PROTEIN 1"/>
    <property type="match status" value="1"/>
</dbReference>
<dbReference type="Pfam" id="PF01784">
    <property type="entry name" value="DUF34_NIF3"/>
    <property type="match status" value="1"/>
</dbReference>
<dbReference type="SUPFAM" id="SSF102705">
    <property type="entry name" value="NIF3 (NGG1p interacting factor 3)-like"/>
    <property type="match status" value="1"/>
</dbReference>
<sequence length="288" mass="31888">MSRAITRAQLDKLVRSITKFYPQKYADKSWDNTGLLIDCSTAQVTTADANAKTKVLLTVDLTKSVAQEAVDANCNVIVAYHPFIFPSWNRLSPHTNPQHETAIKLIQYGISVYCPHTAVDAARGGVNDWLVRGLNNGENVAKSYALETVSGETDDLIGYGRFVEFNKDISLEQIVKNVKRVLRVPYVQVASLAAPSAWNQLKIKKVAVCAGSGSGVFKQLKEDVDLYYTGEMSHHEVLKWKEMGKTVIVCNHSNTERGFLQDVMKGLLQDEGHEVVVSKMDCDPLTVA</sequence>
<keyword id="KW-0496">Mitochondrion</keyword>
<keyword id="KW-1185">Reference proteome</keyword>
<accession>P53081</accession>
<accession>D6VVB4</accession>
<accession>E9P932</accession>
<proteinExistence type="evidence at protein level"/>
<name>NIF3_YEAST</name>
<comment type="subunit">
    <text evidence="3">May interact with NGG1.</text>
</comment>
<comment type="subcellular location">
    <subcellularLocation>
        <location evidence="2">Mitochondrion</location>
    </subcellularLocation>
</comment>
<comment type="miscellaneous">
    <text evidence="1">Present with 6000 molecules/cell in log phase SD medium.</text>
</comment>
<comment type="similarity">
    <text evidence="5">Belongs to the GTP cyclohydrolase I type 2/NIF3 family.</text>
</comment>
<gene>
    <name evidence="6" type="primary">NIF3</name>
    <name evidence="6" type="ordered locus">YGL221C</name>
</gene>
<feature type="chain" id="PRO_0000147356" description="NGG1-interacting factor 3">
    <location>
        <begin position="1"/>
        <end position="288"/>
    </location>
</feature>
<feature type="sequence conflict" description="In Ref. 4; AAT93235." evidence="5" ref="4">
    <original>T</original>
    <variation>A</variation>
    <location>
        <position position="53"/>
    </location>
</feature>
<evidence type="ECO:0000269" key="1">
    <source>
    </source>
</evidence>
<evidence type="ECO:0000269" key="2">
    <source>
    </source>
</evidence>
<evidence type="ECO:0000269" key="3">
    <source>
    </source>
</evidence>
<evidence type="ECO:0000303" key="4">
    <source>
    </source>
</evidence>
<evidence type="ECO:0000305" key="5"/>
<evidence type="ECO:0000312" key="6">
    <source>
        <dbReference type="SGD" id="S000003189"/>
    </source>
</evidence>
<reference key="1">
    <citation type="journal article" date="1997" name="Yeast">
        <title>Sequence analysis of 203 kilobases from Saccharomyces cerevisiae chromosome VII.</title>
        <authorList>
            <person name="Rieger M."/>
            <person name="Brueckner M."/>
            <person name="Schaefer M."/>
            <person name="Mueller-Auer S."/>
        </authorList>
    </citation>
    <scope>NUCLEOTIDE SEQUENCE [GENOMIC DNA]</scope>
    <source>
        <strain>ATCC 204508 / S288c</strain>
    </source>
</reference>
<reference key="2">
    <citation type="journal article" date="1997" name="Nature">
        <title>The nucleotide sequence of Saccharomyces cerevisiae chromosome VII.</title>
        <authorList>
            <person name="Tettelin H."/>
            <person name="Agostoni-Carbone M.L."/>
            <person name="Albermann K."/>
            <person name="Albers M."/>
            <person name="Arroyo J."/>
            <person name="Backes U."/>
            <person name="Barreiros T."/>
            <person name="Bertani I."/>
            <person name="Bjourson A.J."/>
            <person name="Brueckner M."/>
            <person name="Bruschi C.V."/>
            <person name="Carignani G."/>
            <person name="Castagnoli L."/>
            <person name="Cerdan E."/>
            <person name="Clemente M.L."/>
            <person name="Coblenz A."/>
            <person name="Coglievina M."/>
            <person name="Coissac E."/>
            <person name="Defoor E."/>
            <person name="Del Bino S."/>
            <person name="Delius H."/>
            <person name="Delneri D."/>
            <person name="de Wergifosse P."/>
            <person name="Dujon B."/>
            <person name="Durand P."/>
            <person name="Entian K.-D."/>
            <person name="Eraso P."/>
            <person name="Escribano V."/>
            <person name="Fabiani L."/>
            <person name="Fartmann B."/>
            <person name="Feroli F."/>
            <person name="Feuermann M."/>
            <person name="Frontali L."/>
            <person name="Garcia-Gonzalez M."/>
            <person name="Garcia-Saez M.I."/>
            <person name="Goffeau A."/>
            <person name="Guerreiro P."/>
            <person name="Hani J."/>
            <person name="Hansen M."/>
            <person name="Hebling U."/>
            <person name="Hernandez K."/>
            <person name="Heumann K."/>
            <person name="Hilger F."/>
            <person name="Hofmann B."/>
            <person name="Indge K.J."/>
            <person name="James C.M."/>
            <person name="Klima R."/>
            <person name="Koetter P."/>
            <person name="Kramer B."/>
            <person name="Kramer W."/>
            <person name="Lauquin G."/>
            <person name="Leuther H."/>
            <person name="Louis E.J."/>
            <person name="Maillier E."/>
            <person name="Marconi A."/>
            <person name="Martegani E."/>
            <person name="Mazon M.J."/>
            <person name="Mazzoni C."/>
            <person name="McReynolds A.D.K."/>
            <person name="Melchioretto P."/>
            <person name="Mewes H.-W."/>
            <person name="Minenkova O."/>
            <person name="Mueller-Auer S."/>
            <person name="Nawrocki A."/>
            <person name="Netter P."/>
            <person name="Neu R."/>
            <person name="Nombela C."/>
            <person name="Oliver S.G."/>
            <person name="Panzeri L."/>
            <person name="Paoluzi S."/>
            <person name="Plevani P."/>
            <person name="Portetelle D."/>
            <person name="Portillo F."/>
            <person name="Potier S."/>
            <person name="Purnelle B."/>
            <person name="Rieger M."/>
            <person name="Riles L."/>
            <person name="Rinaldi T."/>
            <person name="Robben J."/>
            <person name="Rodrigues-Pousada C."/>
            <person name="Rodriguez-Belmonte E."/>
            <person name="Rodriguez-Torres A.M."/>
            <person name="Rose M."/>
            <person name="Ruzzi M."/>
            <person name="Saliola M."/>
            <person name="Sanchez-Perez M."/>
            <person name="Schaefer B."/>
            <person name="Schaefer M."/>
            <person name="Scharfe M."/>
            <person name="Schmidheini T."/>
            <person name="Schreer A."/>
            <person name="Skala J."/>
            <person name="Souciet J.-L."/>
            <person name="Steensma H.Y."/>
            <person name="Talla E."/>
            <person name="Thierry A."/>
            <person name="Vandenbol M."/>
            <person name="van der Aart Q.J.M."/>
            <person name="Van Dyck L."/>
            <person name="Vanoni M."/>
            <person name="Verhasselt P."/>
            <person name="Voet M."/>
            <person name="Volckaert G."/>
            <person name="Wambutt R."/>
            <person name="Watson M.D."/>
            <person name="Weber N."/>
            <person name="Wedler E."/>
            <person name="Wedler H."/>
            <person name="Wipfli P."/>
            <person name="Wolf K."/>
            <person name="Wright L.F."/>
            <person name="Zaccaria P."/>
            <person name="Zimmermann M."/>
            <person name="Zollner A."/>
            <person name="Kleine K."/>
        </authorList>
    </citation>
    <scope>NUCLEOTIDE SEQUENCE [LARGE SCALE GENOMIC DNA]</scope>
    <source>
        <strain>ATCC 204508 / S288c</strain>
    </source>
</reference>
<reference key="3">
    <citation type="journal article" date="2014" name="G3 (Bethesda)">
        <title>The reference genome sequence of Saccharomyces cerevisiae: Then and now.</title>
        <authorList>
            <person name="Engel S.R."/>
            <person name="Dietrich F.S."/>
            <person name="Fisk D.G."/>
            <person name="Binkley G."/>
            <person name="Balakrishnan R."/>
            <person name="Costanzo M.C."/>
            <person name="Dwight S.S."/>
            <person name="Hitz B.C."/>
            <person name="Karra K."/>
            <person name="Nash R.S."/>
            <person name="Weng S."/>
            <person name="Wong E.D."/>
            <person name="Lloyd P."/>
            <person name="Skrzypek M.S."/>
            <person name="Miyasato S.R."/>
            <person name="Simison M."/>
            <person name="Cherry J.M."/>
        </authorList>
    </citation>
    <scope>GENOME REANNOTATION</scope>
    <source>
        <strain>ATCC 204508 / S288c</strain>
    </source>
</reference>
<reference key="4">
    <citation type="journal article" date="2007" name="Genome Res.">
        <title>Approaching a complete repository of sequence-verified protein-encoding clones for Saccharomyces cerevisiae.</title>
        <authorList>
            <person name="Hu Y."/>
            <person name="Rolfs A."/>
            <person name="Bhullar B."/>
            <person name="Murthy T.V.S."/>
            <person name="Zhu C."/>
            <person name="Berger M.F."/>
            <person name="Camargo A.A."/>
            <person name="Kelley F."/>
            <person name="McCarron S."/>
            <person name="Jepson D."/>
            <person name="Richardson A."/>
            <person name="Raphael J."/>
            <person name="Moreira D."/>
            <person name="Taycher E."/>
            <person name="Zuo D."/>
            <person name="Mohr S."/>
            <person name="Kane M.F."/>
            <person name="Williamson J."/>
            <person name="Simpson A.J.G."/>
            <person name="Bulyk M.L."/>
            <person name="Harlow E."/>
            <person name="Marsischky G."/>
            <person name="Kolodner R.D."/>
            <person name="LaBaer J."/>
        </authorList>
    </citation>
    <scope>NUCLEOTIDE SEQUENCE [GENOMIC DNA]</scope>
    <source>
        <strain>ATCC 204508 / S288c</strain>
    </source>
</reference>
<reference key="5">
    <citation type="journal article" date="1996" name="J. Biol. Chem.">
        <title>Transcriptional activation by yeast PDR1p is inhibited by its association with NGG1p/ADA3p.</title>
        <authorList>
            <person name="Martens J.A."/>
            <person name="Genereaux J."/>
            <person name="Saleh A."/>
            <person name="Brandl C.J."/>
        </authorList>
    </citation>
    <scope>INTERACTION WITH NGG1</scope>
</reference>
<reference key="6">
    <citation type="journal article" date="2003" name="Nature">
        <title>Global analysis of protein expression in yeast.</title>
        <authorList>
            <person name="Ghaemmaghami S."/>
            <person name="Huh W.-K."/>
            <person name="Bower K."/>
            <person name="Howson R.W."/>
            <person name="Belle A."/>
            <person name="Dephoure N."/>
            <person name="O'Shea E.K."/>
            <person name="Weissman J.S."/>
        </authorList>
    </citation>
    <scope>LEVEL OF PROTEIN EXPRESSION [LARGE SCALE ANALYSIS]</scope>
</reference>
<reference key="7">
    <citation type="journal article" date="2006" name="J. Proteome Res.">
        <title>Toward the complete yeast mitochondrial proteome: multidimensional separation techniques for mitochondrial proteomics.</title>
        <authorList>
            <person name="Reinders J."/>
            <person name="Zahedi R.P."/>
            <person name="Pfanner N."/>
            <person name="Meisinger C."/>
            <person name="Sickmann A."/>
        </authorList>
    </citation>
    <scope>SUBCELLULAR LOCATION [LARGE SCALE ANALYSIS]</scope>
    <scope>IDENTIFICATION BY MASS SPECTROMETRY</scope>
</reference>
<reference key="8">
    <citation type="journal article" date="2008" name="Mol. Cell. Proteomics">
        <title>A multidimensional chromatography technology for in-depth phosphoproteome analysis.</title>
        <authorList>
            <person name="Albuquerque C.P."/>
            <person name="Smolka M.B."/>
            <person name="Payne S.H."/>
            <person name="Bafna V."/>
            <person name="Eng J."/>
            <person name="Zhou H."/>
        </authorList>
    </citation>
    <scope>IDENTIFICATION BY MASS SPECTROMETRY [LARGE SCALE ANALYSIS]</scope>
</reference>